<dbReference type="EMBL" id="U94837">
    <property type="protein sequence ID" value="AAB82335.1"/>
    <property type="molecule type" value="mRNA"/>
</dbReference>
<dbReference type="EMBL" id="BC059320">
    <property type="protein sequence ID" value="AAH59320.1"/>
    <property type="molecule type" value="mRNA"/>
</dbReference>
<dbReference type="RefSeq" id="NP_001079059.1">
    <property type="nucleotide sequence ID" value="NM_001085590.1"/>
</dbReference>
<dbReference type="SMR" id="O13023"/>
<dbReference type="GeneID" id="373590"/>
<dbReference type="KEGG" id="xla:373590"/>
<dbReference type="AGR" id="Xenbase:XB-GENE-865680"/>
<dbReference type="CTD" id="373590"/>
<dbReference type="Xenbase" id="XB-GENE-865680">
    <property type="gene designation" value="hhex.L"/>
</dbReference>
<dbReference type="OMA" id="FTGSFYP"/>
<dbReference type="OrthoDB" id="6159439at2759"/>
<dbReference type="Proteomes" id="UP000186698">
    <property type="component" value="Chromosome 7L"/>
</dbReference>
<dbReference type="Bgee" id="373590">
    <property type="expression patterns" value="Expressed in liver and 15 other cell types or tissues"/>
</dbReference>
<dbReference type="GO" id="GO:0005634">
    <property type="term" value="C:nucleus"/>
    <property type="evidence" value="ECO:0000250"/>
    <property type="project" value="UniProtKB"/>
</dbReference>
<dbReference type="GO" id="GO:0000981">
    <property type="term" value="F:DNA-binding transcription factor activity, RNA polymerase II-specific"/>
    <property type="evidence" value="ECO:0007669"/>
    <property type="project" value="InterPro"/>
</dbReference>
<dbReference type="GO" id="GO:0000978">
    <property type="term" value="F:RNA polymerase II cis-regulatory region sequence-specific DNA binding"/>
    <property type="evidence" value="ECO:0000318"/>
    <property type="project" value="GO_Central"/>
</dbReference>
<dbReference type="GO" id="GO:0043565">
    <property type="term" value="F:sequence-specific DNA binding"/>
    <property type="evidence" value="ECO:0000250"/>
    <property type="project" value="UniProtKB"/>
</dbReference>
<dbReference type="GO" id="GO:0009952">
    <property type="term" value="P:anterior/posterior pattern specification"/>
    <property type="evidence" value="ECO:0000315"/>
    <property type="project" value="UniProtKB"/>
</dbReference>
<dbReference type="GO" id="GO:0030154">
    <property type="term" value="P:cell differentiation"/>
    <property type="evidence" value="ECO:0000318"/>
    <property type="project" value="GO_Central"/>
</dbReference>
<dbReference type="GO" id="GO:0035162">
    <property type="term" value="P:embryonic hemopoiesis"/>
    <property type="evidence" value="ECO:0000250"/>
    <property type="project" value="UniProtKB"/>
</dbReference>
<dbReference type="GO" id="GO:0007507">
    <property type="term" value="P:heart development"/>
    <property type="evidence" value="ECO:0000315"/>
    <property type="project" value="UniProtKB"/>
</dbReference>
<dbReference type="GO" id="GO:0001889">
    <property type="term" value="P:liver development"/>
    <property type="evidence" value="ECO:0000270"/>
    <property type="project" value="UniProtKB"/>
</dbReference>
<dbReference type="GO" id="GO:0045892">
    <property type="term" value="P:negative regulation of DNA-templated transcription"/>
    <property type="evidence" value="ECO:0000250"/>
    <property type="project" value="UniProtKB"/>
</dbReference>
<dbReference type="GO" id="GO:0000122">
    <property type="term" value="P:negative regulation of transcription by RNA polymerase II"/>
    <property type="evidence" value="ECO:0000250"/>
    <property type="project" value="UniProtKB"/>
</dbReference>
<dbReference type="GO" id="GO:0030177">
    <property type="term" value="P:positive regulation of Wnt signaling pathway"/>
    <property type="evidence" value="ECO:0000315"/>
    <property type="project" value="UniProtKB"/>
</dbReference>
<dbReference type="GO" id="GO:0006357">
    <property type="term" value="P:regulation of transcription by RNA polymerase II"/>
    <property type="evidence" value="ECO:0000318"/>
    <property type="project" value="GO_Central"/>
</dbReference>
<dbReference type="GO" id="GO:0001570">
    <property type="term" value="P:vasculogenesis"/>
    <property type="evidence" value="ECO:0000315"/>
    <property type="project" value="UniProtKB"/>
</dbReference>
<dbReference type="GO" id="GO:0016055">
    <property type="term" value="P:Wnt signaling pathway"/>
    <property type="evidence" value="ECO:0007669"/>
    <property type="project" value="UniProtKB-KW"/>
</dbReference>
<dbReference type="CDD" id="cd00086">
    <property type="entry name" value="homeodomain"/>
    <property type="match status" value="1"/>
</dbReference>
<dbReference type="FunFam" id="1.10.10.60:FF:000178">
    <property type="entry name" value="hematopoietically-expressed homeobox protein HHEX"/>
    <property type="match status" value="1"/>
</dbReference>
<dbReference type="Gene3D" id="1.10.10.60">
    <property type="entry name" value="Homeodomain-like"/>
    <property type="match status" value="1"/>
</dbReference>
<dbReference type="InterPro" id="IPR001356">
    <property type="entry name" value="HD"/>
</dbReference>
<dbReference type="InterPro" id="IPR020479">
    <property type="entry name" value="HD_metazoa"/>
</dbReference>
<dbReference type="InterPro" id="IPR017970">
    <property type="entry name" value="Homeobox_CS"/>
</dbReference>
<dbReference type="InterPro" id="IPR051000">
    <property type="entry name" value="Homeobox_DNA-bind_prot"/>
</dbReference>
<dbReference type="InterPro" id="IPR009057">
    <property type="entry name" value="Homeodomain-like_sf"/>
</dbReference>
<dbReference type="PANTHER" id="PTHR24324:SF5">
    <property type="entry name" value="HEMATOPOIETICALLY-EXPRESSED HOMEOBOX PROTEIN HHEX"/>
    <property type="match status" value="1"/>
</dbReference>
<dbReference type="PANTHER" id="PTHR24324">
    <property type="entry name" value="HOMEOBOX PROTEIN HHEX"/>
    <property type="match status" value="1"/>
</dbReference>
<dbReference type="Pfam" id="PF00046">
    <property type="entry name" value="Homeodomain"/>
    <property type="match status" value="1"/>
</dbReference>
<dbReference type="PRINTS" id="PR00024">
    <property type="entry name" value="HOMEOBOX"/>
</dbReference>
<dbReference type="SMART" id="SM00389">
    <property type="entry name" value="HOX"/>
    <property type="match status" value="1"/>
</dbReference>
<dbReference type="SUPFAM" id="SSF46689">
    <property type="entry name" value="Homeodomain-like"/>
    <property type="match status" value="1"/>
</dbReference>
<dbReference type="PROSITE" id="PS00027">
    <property type="entry name" value="HOMEOBOX_1"/>
    <property type="match status" value="1"/>
</dbReference>
<dbReference type="PROSITE" id="PS50071">
    <property type="entry name" value="HOMEOBOX_2"/>
    <property type="match status" value="1"/>
</dbReference>
<feature type="chain" id="PRO_0000326220" description="Hematopoietically-expressed homeobox protein hhex">
    <location>
        <begin position="1"/>
        <end position="272"/>
    </location>
</feature>
<feature type="DNA-binding region" description="Homeobox" evidence="5">
    <location>
        <begin position="137"/>
        <end position="196"/>
    </location>
</feature>
<feature type="region of interest" description="Disordered" evidence="6">
    <location>
        <begin position="222"/>
        <end position="272"/>
    </location>
</feature>
<feature type="compositionally biased region" description="Acidic residues" evidence="6">
    <location>
        <begin position="250"/>
        <end position="261"/>
    </location>
</feature>
<gene>
    <name evidence="1" type="primary">hhex</name>
    <name evidence="14" type="synonym">hex</name>
    <name type="synonym">hhex-a</name>
</gene>
<evidence type="ECO:0000250" key="1">
    <source>
        <dbReference type="UniProtKB" id="P43120"/>
    </source>
</evidence>
<evidence type="ECO:0000250" key="2">
    <source>
        <dbReference type="UniProtKB" id="Q05502"/>
    </source>
</evidence>
<evidence type="ECO:0000250" key="3">
    <source>
        <dbReference type="UniProtKB" id="Q9IAV3"/>
    </source>
</evidence>
<evidence type="ECO:0000255" key="4"/>
<evidence type="ECO:0000255" key="5">
    <source>
        <dbReference type="PROSITE-ProRule" id="PRU00108"/>
    </source>
</evidence>
<evidence type="ECO:0000256" key="6">
    <source>
        <dbReference type="SAM" id="MobiDB-lite"/>
    </source>
</evidence>
<evidence type="ECO:0000269" key="7">
    <source>
    </source>
</evidence>
<evidence type="ECO:0000269" key="8">
    <source>
    </source>
</evidence>
<evidence type="ECO:0000269" key="9">
    <source>
    </source>
</evidence>
<evidence type="ECO:0000269" key="10">
    <source>
    </source>
</evidence>
<evidence type="ECO:0000269" key="11">
    <source>
    </source>
</evidence>
<evidence type="ECO:0000269" key="12">
    <source>
    </source>
</evidence>
<evidence type="ECO:0000269" key="13">
    <source>
    </source>
</evidence>
<evidence type="ECO:0000303" key="14">
    <source>
    </source>
</evidence>
<evidence type="ECO:0000305" key="15"/>
<evidence type="ECO:0000312" key="16">
    <source>
        <dbReference type="EMBL" id="AAB82335.1"/>
    </source>
</evidence>
<evidence type="ECO:0000312" key="17">
    <source>
        <dbReference type="EMBL" id="AAH59320.1"/>
    </source>
</evidence>
<proteinExistence type="evidence at transcript level"/>
<protein>
    <recommendedName>
        <fullName>Hematopoietically-expressed homeobox protein hhex</fullName>
        <shortName>Homeobox protein hex</shortName>
        <shortName>XHex</shortName>
    </recommendedName>
    <alternativeName>
        <fullName>Hhex-A protein</fullName>
    </alternativeName>
</protein>
<reference evidence="15 16" key="1">
    <citation type="journal article" date="1997" name="Mech. Dev.">
        <title>The XHex homeobox gene is expressed during development of the vascular endothelium: overexpression leads to an increase in vascular endothelial cell number.</title>
        <authorList>
            <person name="Newman C.S."/>
            <person name="Chia F."/>
            <person name="Krieg P.A."/>
        </authorList>
    </citation>
    <scope>NUCLEOTIDE SEQUENCE [MRNA]</scope>
    <scope>FUNCTION</scope>
    <scope>TISSUE SPECIFICITY</scope>
    <scope>DEVELOPMENTAL STAGE</scope>
    <source>
        <tissue evidence="16">Heart</tissue>
    </source>
</reference>
<reference evidence="17" key="2">
    <citation type="submission" date="2003-10" db="EMBL/GenBank/DDBJ databases">
        <authorList>
            <consortium name="NIH - Xenopus Gene Collection (XGC) project"/>
        </authorList>
    </citation>
    <scope>NUCLEOTIDE SEQUENCE [LARGE SCALE MRNA]</scope>
    <source>
        <tissue evidence="17">Spleen</tissue>
    </source>
</reference>
<reference evidence="15" key="3">
    <citation type="journal article" date="1999" name="Curr. Biol.">
        <title>An anterior signalling centre in Xenopus revealed by the homeobox gene XHex.</title>
        <authorList>
            <person name="Jones C.M."/>
            <person name="Broadbent J."/>
            <person name="Thomas P.Q."/>
            <person name="Smith J.C."/>
            <person name="Beddington R.S.P."/>
        </authorList>
    </citation>
    <scope>FUNCTION</scope>
    <scope>TISSUE SPECIFICITY</scope>
    <scope>INDUCTION</scope>
</reference>
<reference evidence="15" key="4">
    <citation type="journal article" date="1999" name="Dev. Biol.">
        <title>Anterior endomesoderm specification in Xenopus by Wnt/beta-catenin and TGF-beta signalling pathways.</title>
        <authorList>
            <person name="Zorn A.M."/>
            <person name="Butler K."/>
            <person name="Gurdon J.B."/>
        </authorList>
    </citation>
    <scope>FUNCTION</scope>
    <scope>TISSUE SPECIFICITY</scope>
    <scope>INDUCTION</scope>
</reference>
<reference evidence="15" key="5">
    <citation type="journal article" date="2001" name="Mech. Dev.">
        <title>Gene expression in the embryonic Xenopus liver.</title>
        <authorList>
            <person name="Zorn A.M."/>
            <person name="Mason J."/>
        </authorList>
    </citation>
    <scope>TISSUE SPECIFICITY</scope>
</reference>
<reference evidence="15" key="6">
    <citation type="journal article" date="2002" name="Mech. Dev.">
        <title>Xhex-expressing endodermal tissues are essential for anterior patterning in Xenopus.</title>
        <authorList>
            <person name="Smithers L.E."/>
            <person name="Jones C.M."/>
        </authorList>
    </citation>
    <scope>FUNCTION</scope>
</reference>
<reference evidence="15" key="7">
    <citation type="journal article" date="2005" name="Genes Dev.">
        <title>Heart induction by Wnt antagonists depends on the homeodomain transcription factor Hex.</title>
        <authorList>
            <person name="Foley A.C."/>
            <person name="Mercola M."/>
        </authorList>
    </citation>
    <scope>FUNCTION</scope>
</reference>
<reference evidence="15" key="8">
    <citation type="journal article" date="2006" name="Development">
        <title>Hex acts with beta-catenin to regulate anteroposterior patterning via a Groucho-related co-repressor and Nodal.</title>
        <authorList>
            <person name="Zamparini A.L."/>
            <person name="Watts T."/>
            <person name="Gardner C.E."/>
            <person name="Tomlinson S.R."/>
            <person name="Johnston G.I."/>
            <person name="Brickman J.M."/>
        </authorList>
    </citation>
    <scope>FUNCTION</scope>
</reference>
<comment type="function">
    <text evidence="2 3 7 8 10 11 12 13">Recognizes the DNA sequence 5'-ATTAA-3'. Transcriptional repressor. Regulates the differentiation of both endothelial and blood cells (By similarity). Probably plays a role in the proliferation of vascular endothelial cells during blood vessel development. Establishes anterior identity at two levels; acts early to enhance canonical wnt-signaling by repressing expression of tle4, and acts later to inhibit nodal-signaling by directly targeting nodal/nr1 and nodal2/nr2. May play a role in liver development. Induces heart development.</text>
</comment>
<comment type="subcellular location">
    <subcellularLocation>
        <location evidence="4 15">Nucleus</location>
    </subcellularLocation>
</comment>
<comment type="tissue specificity">
    <text evidence="7 8 9 13">First expressed in the dorsal endomesoderm of the gastrula stage embryo. The dorsal endomesoderm contributes to forming the embryonic liver, and expression continues in the liver throughout development. Also expressed in precursors of the developing thyroid gland, and beginning at the tailbud stage, expressed in the ventral region of the head. Also transiently expressed in the endothelial layer of developing vascular tissues of the embryo, beginning at the tailbud stages.</text>
</comment>
<comment type="developmental stage">
    <text evidence="13">Expressed zygotically. During gastrulation, expression levels rise rapidly to peak at about stage 10.5. Following gastrulation, levels decrease slightly and then increase again during early tailbud stages, with expression continuing throughout embryonic development.</text>
</comment>
<comment type="induction">
    <text evidence="7 8">By maternal wnt-beta-catenin signaling and tgf-beta signaling.</text>
</comment>
<organism>
    <name type="scientific">Xenopus laevis</name>
    <name type="common">African clawed frog</name>
    <dbReference type="NCBI Taxonomy" id="8355"/>
    <lineage>
        <taxon>Eukaryota</taxon>
        <taxon>Metazoa</taxon>
        <taxon>Chordata</taxon>
        <taxon>Craniata</taxon>
        <taxon>Vertebrata</taxon>
        <taxon>Euteleostomi</taxon>
        <taxon>Amphibia</taxon>
        <taxon>Batrachia</taxon>
        <taxon>Anura</taxon>
        <taxon>Pipoidea</taxon>
        <taxon>Pipidae</taxon>
        <taxon>Xenopodinae</taxon>
        <taxon>Xenopus</taxon>
        <taxon>Xenopus</taxon>
    </lineage>
</organism>
<sequence>MQYQHPSSSALGLSVPLFAPTPLQHPTPFYIDDILGRNSASNGTPALPTPTLPSPNSSFTSLVATYRTPIYEPTPIHPAFTHPGAALAASYGASTYASPLYPFSRPVSDYTHALIRHDSLGKPLLWSPFIQRPLHKRKGGQVRFSNDQTIELEKKFETQKYLSPPERKRLAKMLQLSERQVKTWFQNRRAKWRRLKQENPQGNKKDETESLENICEESQERCLSAEQKSRESSLDDPTSSPTSQGNLDSEVSDDSDQEVDIEGDKGYYNCAH</sequence>
<keyword id="KW-0217">Developmental protein</keyword>
<keyword id="KW-0238">DNA-binding</keyword>
<keyword id="KW-0371">Homeobox</keyword>
<keyword id="KW-0539">Nucleus</keyword>
<keyword id="KW-1185">Reference proteome</keyword>
<keyword id="KW-0678">Repressor</keyword>
<keyword id="KW-0804">Transcription</keyword>
<keyword id="KW-0805">Transcription regulation</keyword>
<keyword id="KW-0879">Wnt signaling pathway</keyword>
<name>HHEX_XENLA</name>
<accession>O13023</accession>